<dbReference type="EMBL" id="AE000782">
    <property type="protein sequence ID" value="AAB90980.1"/>
    <property type="molecule type" value="Genomic_DNA"/>
</dbReference>
<dbReference type="PIR" id="B69282">
    <property type="entry name" value="B69282"/>
</dbReference>
<dbReference type="RefSeq" id="WP_010877769.1">
    <property type="nucleotide sequence ID" value="NC_000917.1"/>
</dbReference>
<dbReference type="SMR" id="O29981"/>
<dbReference type="STRING" id="224325.AF_0258"/>
<dbReference type="PaxDb" id="224325-AF_0258"/>
<dbReference type="EnsemblBacteria" id="AAB90980">
    <property type="protein sequence ID" value="AAB90980"/>
    <property type="gene ID" value="AF_0258"/>
</dbReference>
<dbReference type="GeneID" id="1483470"/>
<dbReference type="KEGG" id="afu:AF_0258"/>
<dbReference type="eggNOG" id="arCOG06149">
    <property type="taxonomic scope" value="Archaea"/>
</dbReference>
<dbReference type="HOGENOM" id="CLU_2127696_0_0_2"/>
<dbReference type="Proteomes" id="UP000002199">
    <property type="component" value="Chromosome"/>
</dbReference>
<dbReference type="GO" id="GO:0005886">
    <property type="term" value="C:plasma membrane"/>
    <property type="evidence" value="ECO:0007669"/>
    <property type="project" value="UniProtKB-SubCell"/>
</dbReference>
<proteinExistence type="predicted"/>
<accession>O29981</accession>
<keyword id="KW-1003">Cell membrane</keyword>
<keyword id="KW-0472">Membrane</keyword>
<keyword id="KW-1185">Reference proteome</keyword>
<keyword id="KW-0812">Transmembrane</keyword>
<keyword id="KW-1133">Transmembrane helix</keyword>
<comment type="subcellular location">
    <subcellularLocation>
        <location evidence="2">Cell membrane</location>
        <topology evidence="2">Multi-pass membrane protein</topology>
    </subcellularLocation>
</comment>
<protein>
    <recommendedName>
        <fullName>Uncharacterized protein AF_0258</fullName>
    </recommendedName>
</protein>
<sequence length="113" mass="13015">MSIEVRKSIFPSLPIIVFIVFVEVPVLSVIYPLIEVLTIYPLLISLIFSLAVFAYKFQKSEKNLKRLARQIMALFVIFWLLSQITMVVAVESEYHGIVSFRRDIYNAQLSCKG</sequence>
<gene>
    <name type="ordered locus">AF_0258</name>
</gene>
<name>Y258_ARCFU</name>
<reference key="1">
    <citation type="journal article" date="1997" name="Nature">
        <title>The complete genome sequence of the hyperthermophilic, sulphate-reducing archaeon Archaeoglobus fulgidus.</title>
        <authorList>
            <person name="Klenk H.-P."/>
            <person name="Clayton R.A."/>
            <person name="Tomb J.-F."/>
            <person name="White O."/>
            <person name="Nelson K.E."/>
            <person name="Ketchum K.A."/>
            <person name="Dodson R.J."/>
            <person name="Gwinn M.L."/>
            <person name="Hickey E.K."/>
            <person name="Peterson J.D."/>
            <person name="Richardson D.L."/>
            <person name="Kerlavage A.R."/>
            <person name="Graham D.E."/>
            <person name="Kyrpides N.C."/>
            <person name="Fleischmann R.D."/>
            <person name="Quackenbush J."/>
            <person name="Lee N.H."/>
            <person name="Sutton G.G."/>
            <person name="Gill S.R."/>
            <person name="Kirkness E.F."/>
            <person name="Dougherty B.A."/>
            <person name="McKenney K."/>
            <person name="Adams M.D."/>
            <person name="Loftus B.J."/>
            <person name="Peterson S.N."/>
            <person name="Reich C.I."/>
            <person name="McNeil L.K."/>
            <person name="Badger J.H."/>
            <person name="Glodek A."/>
            <person name="Zhou L."/>
            <person name="Overbeek R."/>
            <person name="Gocayne J.D."/>
            <person name="Weidman J.F."/>
            <person name="McDonald L.A."/>
            <person name="Utterback T.R."/>
            <person name="Cotton M.D."/>
            <person name="Spriggs T."/>
            <person name="Artiach P."/>
            <person name="Kaine B.P."/>
            <person name="Sykes S.M."/>
            <person name="Sadow P.W."/>
            <person name="D'Andrea K.P."/>
            <person name="Bowman C."/>
            <person name="Fujii C."/>
            <person name="Garland S.A."/>
            <person name="Mason T.M."/>
            <person name="Olsen G.J."/>
            <person name="Fraser C.M."/>
            <person name="Smith H.O."/>
            <person name="Woese C.R."/>
            <person name="Venter J.C."/>
        </authorList>
    </citation>
    <scope>NUCLEOTIDE SEQUENCE [LARGE SCALE GENOMIC DNA]</scope>
    <source>
        <strain>ATCC 49558 / DSM 4304 / JCM 9628 / NBRC 100126 / VC-16</strain>
    </source>
</reference>
<organism>
    <name type="scientific">Archaeoglobus fulgidus (strain ATCC 49558 / DSM 4304 / JCM 9628 / NBRC 100126 / VC-16)</name>
    <dbReference type="NCBI Taxonomy" id="224325"/>
    <lineage>
        <taxon>Archaea</taxon>
        <taxon>Methanobacteriati</taxon>
        <taxon>Methanobacteriota</taxon>
        <taxon>Archaeoglobi</taxon>
        <taxon>Archaeoglobales</taxon>
        <taxon>Archaeoglobaceae</taxon>
        <taxon>Archaeoglobus</taxon>
    </lineage>
</organism>
<evidence type="ECO:0000255" key="1"/>
<evidence type="ECO:0000305" key="2"/>
<feature type="chain" id="PRO_0000127856" description="Uncharacterized protein AF_0258">
    <location>
        <begin position="1"/>
        <end position="113"/>
    </location>
</feature>
<feature type="transmembrane region" description="Helical" evidence="1">
    <location>
        <begin position="9"/>
        <end position="31"/>
    </location>
</feature>
<feature type="transmembrane region" description="Helical" evidence="1">
    <location>
        <begin position="36"/>
        <end position="58"/>
    </location>
</feature>
<feature type="transmembrane region" description="Helical" evidence="1">
    <location>
        <begin position="71"/>
        <end position="90"/>
    </location>
</feature>